<feature type="chain" id="PRO_0000350437" description="Probable dual-specificity RNA methyltransferase RlmN">
    <location>
        <begin position="1"/>
        <end position="364"/>
    </location>
</feature>
<feature type="domain" description="Radical SAM core" evidence="2">
    <location>
        <begin position="113"/>
        <end position="346"/>
    </location>
</feature>
<feature type="active site" description="Proton acceptor" evidence="1">
    <location>
        <position position="107"/>
    </location>
</feature>
<feature type="active site" description="S-methylcysteine intermediate" evidence="1">
    <location>
        <position position="351"/>
    </location>
</feature>
<feature type="binding site" evidence="1">
    <location>
        <position position="127"/>
    </location>
    <ligand>
        <name>[4Fe-4S] cluster</name>
        <dbReference type="ChEBI" id="CHEBI:49883"/>
        <note>4Fe-4S-S-AdoMet</note>
    </ligand>
</feature>
<feature type="binding site" evidence="1">
    <location>
        <position position="131"/>
    </location>
    <ligand>
        <name>[4Fe-4S] cluster</name>
        <dbReference type="ChEBI" id="CHEBI:49883"/>
        <note>4Fe-4S-S-AdoMet</note>
    </ligand>
</feature>
<feature type="binding site" evidence="1">
    <location>
        <position position="134"/>
    </location>
    <ligand>
        <name>[4Fe-4S] cluster</name>
        <dbReference type="ChEBI" id="CHEBI:49883"/>
        <note>4Fe-4S-S-AdoMet</note>
    </ligand>
</feature>
<feature type="binding site" evidence="1">
    <location>
        <begin position="177"/>
        <end position="178"/>
    </location>
    <ligand>
        <name>S-adenosyl-L-methionine</name>
        <dbReference type="ChEBI" id="CHEBI:59789"/>
    </ligand>
</feature>
<feature type="binding site" evidence="1">
    <location>
        <position position="209"/>
    </location>
    <ligand>
        <name>S-adenosyl-L-methionine</name>
        <dbReference type="ChEBI" id="CHEBI:59789"/>
    </ligand>
</feature>
<feature type="binding site" evidence="1">
    <location>
        <begin position="232"/>
        <end position="234"/>
    </location>
    <ligand>
        <name>S-adenosyl-L-methionine</name>
        <dbReference type="ChEBI" id="CHEBI:59789"/>
    </ligand>
</feature>
<feature type="binding site" evidence="1">
    <location>
        <position position="308"/>
    </location>
    <ligand>
        <name>S-adenosyl-L-methionine</name>
        <dbReference type="ChEBI" id="CHEBI:59789"/>
    </ligand>
</feature>
<feature type="disulfide bond" description="(transient)" evidence="1">
    <location>
        <begin position="120"/>
        <end position="351"/>
    </location>
</feature>
<evidence type="ECO:0000255" key="1">
    <source>
        <dbReference type="HAMAP-Rule" id="MF_01849"/>
    </source>
</evidence>
<evidence type="ECO:0000255" key="2">
    <source>
        <dbReference type="PROSITE-ProRule" id="PRU01266"/>
    </source>
</evidence>
<protein>
    <recommendedName>
        <fullName evidence="1">Probable dual-specificity RNA methyltransferase RlmN</fullName>
        <ecNumber evidence="1">2.1.1.192</ecNumber>
    </recommendedName>
    <alternativeName>
        <fullName evidence="1">23S rRNA (adenine(2503)-C(2))-methyltransferase</fullName>
    </alternativeName>
    <alternativeName>
        <fullName evidence="1">23S rRNA m2A2503 methyltransferase</fullName>
    </alternativeName>
    <alternativeName>
        <fullName evidence="1">Ribosomal RNA large subunit methyltransferase N</fullName>
    </alternativeName>
    <alternativeName>
        <fullName evidence="1">tRNA (adenine(37)-C(2))-methyltransferase</fullName>
    </alternativeName>
    <alternativeName>
        <fullName evidence="1">tRNA m2A37 methyltransferase</fullName>
    </alternativeName>
</protein>
<dbReference type="EC" id="2.1.1.192" evidence="1"/>
<dbReference type="EMBL" id="CP000253">
    <property type="protein sequence ID" value="ABD30292.1"/>
    <property type="molecule type" value="Genomic_DNA"/>
</dbReference>
<dbReference type="RefSeq" id="WP_000626897.1">
    <property type="nucleotide sequence ID" value="NZ_LS483365.1"/>
</dbReference>
<dbReference type="RefSeq" id="YP_499724.1">
    <property type="nucleotide sequence ID" value="NC_007795.1"/>
</dbReference>
<dbReference type="SMR" id="Q2FZ66"/>
<dbReference type="STRING" id="93061.SAOUHSC_01185"/>
<dbReference type="PaxDb" id="1280-SAXN108_1218"/>
<dbReference type="GeneID" id="3919318"/>
<dbReference type="KEGG" id="sao:SAOUHSC_01185"/>
<dbReference type="PATRIC" id="fig|93061.5.peg.1088"/>
<dbReference type="eggNOG" id="COG0820">
    <property type="taxonomic scope" value="Bacteria"/>
</dbReference>
<dbReference type="HOGENOM" id="CLU_029101_0_1_9"/>
<dbReference type="OrthoDB" id="9793973at2"/>
<dbReference type="PRO" id="PR:Q2FZ66"/>
<dbReference type="Proteomes" id="UP000008816">
    <property type="component" value="Chromosome"/>
</dbReference>
<dbReference type="GO" id="GO:0005737">
    <property type="term" value="C:cytoplasm"/>
    <property type="evidence" value="ECO:0007669"/>
    <property type="project" value="UniProtKB-SubCell"/>
</dbReference>
<dbReference type="GO" id="GO:0051539">
    <property type="term" value="F:4 iron, 4 sulfur cluster binding"/>
    <property type="evidence" value="ECO:0007669"/>
    <property type="project" value="UniProtKB-UniRule"/>
</dbReference>
<dbReference type="GO" id="GO:0046872">
    <property type="term" value="F:metal ion binding"/>
    <property type="evidence" value="ECO:0007669"/>
    <property type="project" value="UniProtKB-KW"/>
</dbReference>
<dbReference type="GO" id="GO:0070040">
    <property type="term" value="F:rRNA (adenine(2503)-C2-)-methyltransferase activity"/>
    <property type="evidence" value="ECO:0007669"/>
    <property type="project" value="UniProtKB-UniRule"/>
</dbReference>
<dbReference type="GO" id="GO:0019843">
    <property type="term" value="F:rRNA binding"/>
    <property type="evidence" value="ECO:0007669"/>
    <property type="project" value="UniProtKB-UniRule"/>
</dbReference>
<dbReference type="GO" id="GO:0002935">
    <property type="term" value="F:tRNA (adenine(37)-C2)-methyltransferase activity"/>
    <property type="evidence" value="ECO:0007669"/>
    <property type="project" value="UniProtKB-UniRule"/>
</dbReference>
<dbReference type="GO" id="GO:0000049">
    <property type="term" value="F:tRNA binding"/>
    <property type="evidence" value="ECO:0007669"/>
    <property type="project" value="UniProtKB-UniRule"/>
</dbReference>
<dbReference type="GO" id="GO:0046677">
    <property type="term" value="P:response to antibiotic"/>
    <property type="evidence" value="ECO:0007669"/>
    <property type="project" value="UniProtKB-KW"/>
</dbReference>
<dbReference type="GO" id="GO:0070475">
    <property type="term" value="P:rRNA base methylation"/>
    <property type="evidence" value="ECO:0000318"/>
    <property type="project" value="GO_Central"/>
</dbReference>
<dbReference type="GO" id="GO:0030488">
    <property type="term" value="P:tRNA methylation"/>
    <property type="evidence" value="ECO:0000318"/>
    <property type="project" value="GO_Central"/>
</dbReference>
<dbReference type="CDD" id="cd01335">
    <property type="entry name" value="Radical_SAM"/>
    <property type="match status" value="1"/>
</dbReference>
<dbReference type="FunFam" id="1.10.150.530:FF:000002">
    <property type="entry name" value="Probable dual-specificity RNA methyltransferase RlmN"/>
    <property type="match status" value="1"/>
</dbReference>
<dbReference type="FunFam" id="3.20.20.70:FF:000014">
    <property type="entry name" value="Probable dual-specificity RNA methyltransferase RlmN"/>
    <property type="match status" value="1"/>
</dbReference>
<dbReference type="Gene3D" id="1.10.150.530">
    <property type="match status" value="1"/>
</dbReference>
<dbReference type="Gene3D" id="3.20.20.70">
    <property type="entry name" value="Aldolase class I"/>
    <property type="match status" value="1"/>
</dbReference>
<dbReference type="HAMAP" id="MF_01849">
    <property type="entry name" value="RNA_methyltr_RlmN"/>
    <property type="match status" value="1"/>
</dbReference>
<dbReference type="InterPro" id="IPR013785">
    <property type="entry name" value="Aldolase_TIM"/>
</dbReference>
<dbReference type="InterPro" id="IPR040072">
    <property type="entry name" value="Methyltransferase_A"/>
</dbReference>
<dbReference type="InterPro" id="IPR048641">
    <property type="entry name" value="RlmN_N"/>
</dbReference>
<dbReference type="InterPro" id="IPR027492">
    <property type="entry name" value="RNA_MTrfase_RlmN"/>
</dbReference>
<dbReference type="InterPro" id="IPR004383">
    <property type="entry name" value="rRNA_lsu_MTrfase_RlmN/Cfr"/>
</dbReference>
<dbReference type="InterPro" id="IPR007197">
    <property type="entry name" value="rSAM"/>
</dbReference>
<dbReference type="NCBIfam" id="TIGR00048">
    <property type="entry name" value="rRNA_mod_RlmN"/>
    <property type="match status" value="1"/>
</dbReference>
<dbReference type="PANTHER" id="PTHR30544">
    <property type="entry name" value="23S RRNA METHYLTRANSFERASE"/>
    <property type="match status" value="1"/>
</dbReference>
<dbReference type="PANTHER" id="PTHR30544:SF5">
    <property type="entry name" value="RADICAL SAM CORE DOMAIN-CONTAINING PROTEIN"/>
    <property type="match status" value="1"/>
</dbReference>
<dbReference type="Pfam" id="PF04055">
    <property type="entry name" value="Radical_SAM"/>
    <property type="match status" value="1"/>
</dbReference>
<dbReference type="Pfam" id="PF21016">
    <property type="entry name" value="RlmN_N"/>
    <property type="match status" value="1"/>
</dbReference>
<dbReference type="PIRSF" id="PIRSF006004">
    <property type="entry name" value="CHP00048"/>
    <property type="match status" value="1"/>
</dbReference>
<dbReference type="SFLD" id="SFLDF00275">
    <property type="entry name" value="adenosine_C2_methyltransferase"/>
    <property type="match status" value="1"/>
</dbReference>
<dbReference type="SFLD" id="SFLDG01062">
    <property type="entry name" value="methyltransferase_(Class_A)"/>
    <property type="match status" value="1"/>
</dbReference>
<dbReference type="SUPFAM" id="SSF102114">
    <property type="entry name" value="Radical SAM enzymes"/>
    <property type="match status" value="1"/>
</dbReference>
<dbReference type="PROSITE" id="PS51918">
    <property type="entry name" value="RADICAL_SAM"/>
    <property type="match status" value="1"/>
</dbReference>
<accession>Q2FZ66</accession>
<comment type="function">
    <text evidence="1">Specifically methylates position 2 of adenine 2503 in 23S rRNA and position 2 of adenine 37 in tRNAs. Confers resistance to some classes of antibiotics.</text>
</comment>
<comment type="catalytic activity">
    <reaction evidence="1">
        <text>adenosine(2503) in 23S rRNA + 2 reduced [2Fe-2S]-[ferredoxin] + 2 S-adenosyl-L-methionine = 2-methyladenosine(2503) in 23S rRNA + 5'-deoxyadenosine + L-methionine + 2 oxidized [2Fe-2S]-[ferredoxin] + S-adenosyl-L-homocysteine</text>
        <dbReference type="Rhea" id="RHEA:42916"/>
        <dbReference type="Rhea" id="RHEA-COMP:10000"/>
        <dbReference type="Rhea" id="RHEA-COMP:10001"/>
        <dbReference type="Rhea" id="RHEA-COMP:10152"/>
        <dbReference type="Rhea" id="RHEA-COMP:10282"/>
        <dbReference type="ChEBI" id="CHEBI:17319"/>
        <dbReference type="ChEBI" id="CHEBI:33737"/>
        <dbReference type="ChEBI" id="CHEBI:33738"/>
        <dbReference type="ChEBI" id="CHEBI:57844"/>
        <dbReference type="ChEBI" id="CHEBI:57856"/>
        <dbReference type="ChEBI" id="CHEBI:59789"/>
        <dbReference type="ChEBI" id="CHEBI:74411"/>
        <dbReference type="ChEBI" id="CHEBI:74497"/>
        <dbReference type="EC" id="2.1.1.192"/>
    </reaction>
</comment>
<comment type="catalytic activity">
    <reaction evidence="1">
        <text>adenosine(37) in tRNA + 2 reduced [2Fe-2S]-[ferredoxin] + 2 S-adenosyl-L-methionine = 2-methyladenosine(37) in tRNA + 5'-deoxyadenosine + L-methionine + 2 oxidized [2Fe-2S]-[ferredoxin] + S-adenosyl-L-homocysteine</text>
        <dbReference type="Rhea" id="RHEA:43332"/>
        <dbReference type="Rhea" id="RHEA-COMP:10000"/>
        <dbReference type="Rhea" id="RHEA-COMP:10001"/>
        <dbReference type="Rhea" id="RHEA-COMP:10162"/>
        <dbReference type="Rhea" id="RHEA-COMP:10485"/>
        <dbReference type="ChEBI" id="CHEBI:17319"/>
        <dbReference type="ChEBI" id="CHEBI:33737"/>
        <dbReference type="ChEBI" id="CHEBI:33738"/>
        <dbReference type="ChEBI" id="CHEBI:57844"/>
        <dbReference type="ChEBI" id="CHEBI:57856"/>
        <dbReference type="ChEBI" id="CHEBI:59789"/>
        <dbReference type="ChEBI" id="CHEBI:74411"/>
        <dbReference type="ChEBI" id="CHEBI:74497"/>
        <dbReference type="EC" id="2.1.1.192"/>
    </reaction>
</comment>
<comment type="cofactor">
    <cofactor evidence="1">
        <name>[4Fe-4S] cluster</name>
        <dbReference type="ChEBI" id="CHEBI:49883"/>
    </cofactor>
    <text evidence="1">Binds 1 [4Fe-4S] cluster. The cluster is coordinated with 3 cysteines and an exchangeable S-adenosyl-L-methionine.</text>
</comment>
<comment type="subcellular location">
    <subcellularLocation>
        <location evidence="1">Cytoplasm</location>
    </subcellularLocation>
</comment>
<comment type="miscellaneous">
    <text evidence="1">Reaction proceeds by a ping-pong mechanism involving intermediate methylation of a conserved cysteine residue.</text>
</comment>
<comment type="similarity">
    <text evidence="1">Belongs to the radical SAM superfamily. RlmN family.</text>
</comment>
<organism>
    <name type="scientific">Staphylococcus aureus (strain NCTC 8325 / PS 47)</name>
    <dbReference type="NCBI Taxonomy" id="93061"/>
    <lineage>
        <taxon>Bacteria</taxon>
        <taxon>Bacillati</taxon>
        <taxon>Bacillota</taxon>
        <taxon>Bacilli</taxon>
        <taxon>Bacillales</taxon>
        <taxon>Staphylococcaceae</taxon>
        <taxon>Staphylococcus</taxon>
    </lineage>
</organism>
<proteinExistence type="inferred from homology"/>
<reference key="1">
    <citation type="book" date="2006" name="Gram positive pathogens, 2nd edition">
        <title>The Staphylococcus aureus NCTC 8325 genome.</title>
        <editorList>
            <person name="Fischetti V."/>
            <person name="Novick R."/>
            <person name="Ferretti J."/>
            <person name="Portnoy D."/>
            <person name="Rood J."/>
        </editorList>
        <authorList>
            <person name="Gillaspy A.F."/>
            <person name="Worrell V."/>
            <person name="Orvis J."/>
            <person name="Roe B.A."/>
            <person name="Dyer D.W."/>
            <person name="Iandolo J.J."/>
        </authorList>
    </citation>
    <scope>NUCLEOTIDE SEQUENCE [LARGE SCALE GENOMIC DNA]</scope>
    <source>
        <strain>NCTC 8325 / PS 47</strain>
    </source>
</reference>
<name>RLMN_STAA8</name>
<gene>
    <name evidence="1" type="primary">rlmN</name>
    <name type="ordered locus">SAOUHSC_01185</name>
</gene>
<sequence length="364" mass="41905">MITAEKKKKNKFLPNFDKQSIYSLRFDEMQNWLVEQGQQKFRAKQIFEWLYQKRVDSIDEMTNLSKDLRQLLKDNFTVTTLTTVVKQESKDGTIKFLFELQDGYTIETVLMRHDYGNSVCVTTQVGCRIGCTFCASTLGGLKRNLEAGEIVSQVLTVQKALDATEERVSQIVIMGIGEPFENYDEMMDFLRIVNDDNSLNIGARHITVSTSGIIPRIYDFADEDIQINFAVSLHAAKDEVRSRLMPINRAYNVEKLIEAIQYYQEKTNRRVTFEYGLFGGVNDQLEHARELAHLIKGLNCHVNLIPVNHVPERNYVKTAKNDIFKFEKELKRLGINATIRREQGSDIDAACGQLRAKERQVETR</sequence>
<keyword id="KW-0004">4Fe-4S</keyword>
<keyword id="KW-0046">Antibiotic resistance</keyword>
<keyword id="KW-0963">Cytoplasm</keyword>
<keyword id="KW-1015">Disulfide bond</keyword>
<keyword id="KW-0408">Iron</keyword>
<keyword id="KW-0411">Iron-sulfur</keyword>
<keyword id="KW-0479">Metal-binding</keyword>
<keyword id="KW-0489">Methyltransferase</keyword>
<keyword id="KW-1185">Reference proteome</keyword>
<keyword id="KW-0698">rRNA processing</keyword>
<keyword id="KW-0949">S-adenosyl-L-methionine</keyword>
<keyword id="KW-0808">Transferase</keyword>
<keyword id="KW-0819">tRNA processing</keyword>